<keyword id="KW-0963">Cytoplasm</keyword>
<keyword id="KW-0671">Queuosine biosynthesis</keyword>
<keyword id="KW-1185">Reference proteome</keyword>
<keyword id="KW-0949">S-adenosyl-L-methionine</keyword>
<keyword id="KW-0808">Transferase</keyword>
<proteinExistence type="inferred from homology"/>
<evidence type="ECO:0000255" key="1">
    <source>
        <dbReference type="HAMAP-Rule" id="MF_00113"/>
    </source>
</evidence>
<organism>
    <name type="scientific">Tolumonas auensis (strain DSM 9187 / NBRC 110442 / TA 4)</name>
    <dbReference type="NCBI Taxonomy" id="595494"/>
    <lineage>
        <taxon>Bacteria</taxon>
        <taxon>Pseudomonadati</taxon>
        <taxon>Pseudomonadota</taxon>
        <taxon>Gammaproteobacteria</taxon>
        <taxon>Aeromonadales</taxon>
        <taxon>Aeromonadaceae</taxon>
        <taxon>Tolumonas</taxon>
    </lineage>
</organism>
<accession>C4L7L4</accession>
<protein>
    <recommendedName>
        <fullName evidence="1">S-adenosylmethionine:tRNA ribosyltransferase-isomerase</fullName>
        <ecNumber evidence="1">2.4.99.17</ecNumber>
    </recommendedName>
    <alternativeName>
        <fullName evidence="1">Queuosine biosynthesis protein QueA</fullName>
    </alternativeName>
</protein>
<feature type="chain" id="PRO_1000202961" description="S-adenosylmethionine:tRNA ribosyltransferase-isomerase">
    <location>
        <begin position="1"/>
        <end position="348"/>
    </location>
</feature>
<sequence>MLVSDFQFDLPDELIARYPMPERSASRLLMLDGNSGETRHGQFRDVLDLLQPGDLLVFNNTRVIPARMFGQKASGGKLEILVERILDDHSVLAHVRASKAPKPGTQILLDNGFSAKMVARHDTLFELHFAGDLPVLDILNQIGHMPLPPYIDRPDENSDKERYQTVYNQRPGAVAAPTAGLHFDEPLLAALREKGVDFAYVTLHVGAGTFQPVRVERLEDHQMHSEYAEVPAEVIAKINATRERGGRVVAVGTTSVRSLETAAQASLKAGKPLSPFFGDTSIFIFPGYQYQLVDVLITNFHLPGSTLIMLVSAFAGYEHVMNAYQEAITSGYRFFSYGDAMFITRQSL</sequence>
<name>QUEA_TOLAT</name>
<reference key="1">
    <citation type="submission" date="2009-05" db="EMBL/GenBank/DDBJ databases">
        <title>Complete sequence of Tolumonas auensis DSM 9187.</title>
        <authorList>
            <consortium name="US DOE Joint Genome Institute"/>
            <person name="Lucas S."/>
            <person name="Copeland A."/>
            <person name="Lapidus A."/>
            <person name="Glavina del Rio T."/>
            <person name="Tice H."/>
            <person name="Bruce D."/>
            <person name="Goodwin L."/>
            <person name="Pitluck S."/>
            <person name="Chertkov O."/>
            <person name="Brettin T."/>
            <person name="Detter J.C."/>
            <person name="Han C."/>
            <person name="Larimer F."/>
            <person name="Land M."/>
            <person name="Hauser L."/>
            <person name="Kyrpides N."/>
            <person name="Mikhailova N."/>
            <person name="Spring S."/>
            <person name="Beller H."/>
        </authorList>
    </citation>
    <scope>NUCLEOTIDE SEQUENCE [LARGE SCALE GENOMIC DNA]</scope>
    <source>
        <strain>DSM 9187 / NBRC 110442 / TA 4</strain>
    </source>
</reference>
<dbReference type="EC" id="2.4.99.17" evidence="1"/>
<dbReference type="EMBL" id="CP001616">
    <property type="protein sequence ID" value="ACQ93630.1"/>
    <property type="molecule type" value="Genomic_DNA"/>
</dbReference>
<dbReference type="RefSeq" id="WP_015879098.1">
    <property type="nucleotide sequence ID" value="NC_012691.1"/>
</dbReference>
<dbReference type="SMR" id="C4L7L4"/>
<dbReference type="STRING" id="595494.Tola_2031"/>
<dbReference type="KEGG" id="tau:Tola_2031"/>
<dbReference type="eggNOG" id="COG0809">
    <property type="taxonomic scope" value="Bacteria"/>
</dbReference>
<dbReference type="HOGENOM" id="CLU_039110_1_0_6"/>
<dbReference type="OrthoDB" id="9805933at2"/>
<dbReference type="UniPathway" id="UPA00392"/>
<dbReference type="Proteomes" id="UP000009073">
    <property type="component" value="Chromosome"/>
</dbReference>
<dbReference type="GO" id="GO:0005737">
    <property type="term" value="C:cytoplasm"/>
    <property type="evidence" value="ECO:0007669"/>
    <property type="project" value="UniProtKB-SubCell"/>
</dbReference>
<dbReference type="GO" id="GO:0051075">
    <property type="term" value="F:S-adenosylmethionine:tRNA ribosyltransferase-isomerase activity"/>
    <property type="evidence" value="ECO:0007669"/>
    <property type="project" value="UniProtKB-EC"/>
</dbReference>
<dbReference type="GO" id="GO:0008616">
    <property type="term" value="P:queuosine biosynthetic process"/>
    <property type="evidence" value="ECO:0007669"/>
    <property type="project" value="UniProtKB-UniRule"/>
</dbReference>
<dbReference type="GO" id="GO:0002099">
    <property type="term" value="P:tRNA wobble guanine modification"/>
    <property type="evidence" value="ECO:0007669"/>
    <property type="project" value="TreeGrafter"/>
</dbReference>
<dbReference type="FunFam" id="2.40.10.240:FF:000001">
    <property type="entry name" value="S-adenosylmethionine:tRNA ribosyltransferase-isomerase"/>
    <property type="match status" value="1"/>
</dbReference>
<dbReference type="FunFam" id="3.40.1780.10:FF:000001">
    <property type="entry name" value="S-adenosylmethionine:tRNA ribosyltransferase-isomerase"/>
    <property type="match status" value="1"/>
</dbReference>
<dbReference type="Gene3D" id="2.40.10.240">
    <property type="entry name" value="QueA-like"/>
    <property type="match status" value="1"/>
</dbReference>
<dbReference type="Gene3D" id="3.40.1780.10">
    <property type="entry name" value="QueA-like"/>
    <property type="match status" value="1"/>
</dbReference>
<dbReference type="HAMAP" id="MF_00113">
    <property type="entry name" value="QueA"/>
    <property type="match status" value="1"/>
</dbReference>
<dbReference type="InterPro" id="IPR003699">
    <property type="entry name" value="QueA"/>
</dbReference>
<dbReference type="InterPro" id="IPR042118">
    <property type="entry name" value="QueA_dom1"/>
</dbReference>
<dbReference type="InterPro" id="IPR042119">
    <property type="entry name" value="QueA_dom2"/>
</dbReference>
<dbReference type="InterPro" id="IPR036100">
    <property type="entry name" value="QueA_sf"/>
</dbReference>
<dbReference type="NCBIfam" id="NF001140">
    <property type="entry name" value="PRK00147.1"/>
    <property type="match status" value="1"/>
</dbReference>
<dbReference type="NCBIfam" id="TIGR00113">
    <property type="entry name" value="queA"/>
    <property type="match status" value="1"/>
</dbReference>
<dbReference type="PANTHER" id="PTHR30307">
    <property type="entry name" value="S-ADENOSYLMETHIONINE:TRNA RIBOSYLTRANSFERASE-ISOMERASE"/>
    <property type="match status" value="1"/>
</dbReference>
<dbReference type="PANTHER" id="PTHR30307:SF0">
    <property type="entry name" value="S-ADENOSYLMETHIONINE:TRNA RIBOSYLTRANSFERASE-ISOMERASE"/>
    <property type="match status" value="1"/>
</dbReference>
<dbReference type="Pfam" id="PF02547">
    <property type="entry name" value="Queuosine_synth"/>
    <property type="match status" value="1"/>
</dbReference>
<dbReference type="SUPFAM" id="SSF111337">
    <property type="entry name" value="QueA-like"/>
    <property type="match status" value="1"/>
</dbReference>
<gene>
    <name evidence="1" type="primary">queA</name>
    <name type="ordered locus">Tola_2031</name>
</gene>
<comment type="function">
    <text evidence="1">Transfers and isomerizes the ribose moiety from AdoMet to the 7-aminomethyl group of 7-deazaguanine (preQ1-tRNA) to give epoxyqueuosine (oQ-tRNA).</text>
</comment>
<comment type="catalytic activity">
    <reaction evidence="1">
        <text>7-aminomethyl-7-carbaguanosine(34) in tRNA + S-adenosyl-L-methionine = epoxyqueuosine(34) in tRNA + adenine + L-methionine + 2 H(+)</text>
        <dbReference type="Rhea" id="RHEA:32155"/>
        <dbReference type="Rhea" id="RHEA-COMP:10342"/>
        <dbReference type="Rhea" id="RHEA-COMP:18582"/>
        <dbReference type="ChEBI" id="CHEBI:15378"/>
        <dbReference type="ChEBI" id="CHEBI:16708"/>
        <dbReference type="ChEBI" id="CHEBI:57844"/>
        <dbReference type="ChEBI" id="CHEBI:59789"/>
        <dbReference type="ChEBI" id="CHEBI:82833"/>
        <dbReference type="ChEBI" id="CHEBI:194443"/>
        <dbReference type="EC" id="2.4.99.17"/>
    </reaction>
</comment>
<comment type="pathway">
    <text evidence="1">tRNA modification; tRNA-queuosine biosynthesis.</text>
</comment>
<comment type="subunit">
    <text evidence="1">Monomer.</text>
</comment>
<comment type="subcellular location">
    <subcellularLocation>
        <location evidence="1">Cytoplasm</location>
    </subcellularLocation>
</comment>
<comment type="similarity">
    <text evidence="1">Belongs to the QueA family.</text>
</comment>